<reference key="1">
    <citation type="journal article" date="1995" name="Science">
        <title>Whole-genome random sequencing and assembly of Haemophilus influenzae Rd.</title>
        <authorList>
            <person name="Fleischmann R.D."/>
            <person name="Adams M.D."/>
            <person name="White O."/>
            <person name="Clayton R.A."/>
            <person name="Kirkness E.F."/>
            <person name="Kerlavage A.R."/>
            <person name="Bult C.J."/>
            <person name="Tomb J.-F."/>
            <person name="Dougherty B.A."/>
            <person name="Merrick J.M."/>
            <person name="McKenney K."/>
            <person name="Sutton G.G."/>
            <person name="FitzHugh W."/>
            <person name="Fields C.A."/>
            <person name="Gocayne J.D."/>
            <person name="Scott J.D."/>
            <person name="Shirley R."/>
            <person name="Liu L.-I."/>
            <person name="Glodek A."/>
            <person name="Kelley J.M."/>
            <person name="Weidman J.F."/>
            <person name="Phillips C.A."/>
            <person name="Spriggs T."/>
            <person name="Hedblom E."/>
            <person name="Cotton M.D."/>
            <person name="Utterback T.R."/>
            <person name="Hanna M.C."/>
            <person name="Nguyen D.T."/>
            <person name="Saudek D.M."/>
            <person name="Brandon R.C."/>
            <person name="Fine L.D."/>
            <person name="Fritchman J.L."/>
            <person name="Fuhrmann J.L."/>
            <person name="Geoghagen N.S.M."/>
            <person name="Gnehm C.L."/>
            <person name="McDonald L.A."/>
            <person name="Small K.V."/>
            <person name="Fraser C.M."/>
            <person name="Smith H.O."/>
            <person name="Venter J.C."/>
        </authorList>
    </citation>
    <scope>NUCLEOTIDE SEQUENCE [LARGE SCALE GENOMIC DNA]</scope>
    <source>
        <strain>ATCC 51907 / DSM 11121 / KW20 / Rd</strain>
    </source>
</reference>
<gene>
    <name type="ordered locus">HI_1104</name>
</gene>
<keyword id="KW-0997">Cell inner membrane</keyword>
<keyword id="KW-1003">Cell membrane</keyword>
<keyword id="KW-0472">Membrane</keyword>
<keyword id="KW-1185">Reference proteome</keyword>
<keyword id="KW-0812">Transmembrane</keyword>
<keyword id="KW-1133">Transmembrane helix</keyword>
<keyword id="KW-0813">Transport</keyword>
<dbReference type="EMBL" id="L42023">
    <property type="protein sequence ID" value="AAC22759.1"/>
    <property type="molecule type" value="Genomic_DNA"/>
</dbReference>
<dbReference type="PIR" id="C64167">
    <property type="entry name" value="C64167"/>
</dbReference>
<dbReference type="RefSeq" id="NP_439261.1">
    <property type="nucleotide sequence ID" value="NC_000907.1"/>
</dbReference>
<dbReference type="SMR" id="P71369"/>
<dbReference type="STRING" id="71421.HI_1104"/>
<dbReference type="EnsemblBacteria" id="AAC22759">
    <property type="protein sequence ID" value="AAC22759"/>
    <property type="gene ID" value="HI_1104"/>
</dbReference>
<dbReference type="KEGG" id="hin:HI_1104"/>
<dbReference type="PATRIC" id="fig|71421.8.peg.1152"/>
<dbReference type="eggNOG" id="COG2814">
    <property type="taxonomic scope" value="Bacteria"/>
</dbReference>
<dbReference type="HOGENOM" id="CLU_001265_46_6_6"/>
<dbReference type="OrthoDB" id="4474610at2"/>
<dbReference type="PhylomeDB" id="P71369"/>
<dbReference type="BioCyc" id="HINF71421:G1GJ1-1139-MONOMER"/>
<dbReference type="Proteomes" id="UP000000579">
    <property type="component" value="Chromosome"/>
</dbReference>
<dbReference type="GO" id="GO:0005886">
    <property type="term" value="C:plasma membrane"/>
    <property type="evidence" value="ECO:0000318"/>
    <property type="project" value="GO_Central"/>
</dbReference>
<dbReference type="GO" id="GO:0046943">
    <property type="term" value="F:carboxylic acid transmembrane transporter activity"/>
    <property type="evidence" value="ECO:0000318"/>
    <property type="project" value="GO_Central"/>
</dbReference>
<dbReference type="GO" id="GO:0046942">
    <property type="term" value="P:carboxylic acid transport"/>
    <property type="evidence" value="ECO:0000318"/>
    <property type="project" value="GO_Central"/>
</dbReference>
<dbReference type="CDD" id="cd17371">
    <property type="entry name" value="MFS_MucK"/>
    <property type="match status" value="1"/>
</dbReference>
<dbReference type="FunFam" id="1.20.1250.20:FF:001381">
    <property type="entry name" value="Putative metabolite transport protein HI_1104"/>
    <property type="match status" value="1"/>
</dbReference>
<dbReference type="Gene3D" id="1.20.1250.20">
    <property type="entry name" value="MFS general substrate transporter like domains"/>
    <property type="match status" value="2"/>
</dbReference>
<dbReference type="InterPro" id="IPR011701">
    <property type="entry name" value="MFS"/>
</dbReference>
<dbReference type="InterPro" id="IPR020846">
    <property type="entry name" value="MFS_dom"/>
</dbReference>
<dbReference type="InterPro" id="IPR036259">
    <property type="entry name" value="MFS_trans_sf"/>
</dbReference>
<dbReference type="InterPro" id="IPR005829">
    <property type="entry name" value="Sugar_transporter_CS"/>
</dbReference>
<dbReference type="PANTHER" id="PTHR23508">
    <property type="entry name" value="CARBOXYLIC ACID TRANSPORTER PROTEIN HOMOLOG"/>
    <property type="match status" value="1"/>
</dbReference>
<dbReference type="PANTHER" id="PTHR23508:SF10">
    <property type="entry name" value="CARBOXYLIC ACID TRANSPORTER PROTEIN HOMOLOG"/>
    <property type="match status" value="1"/>
</dbReference>
<dbReference type="Pfam" id="PF07690">
    <property type="entry name" value="MFS_1"/>
    <property type="match status" value="1"/>
</dbReference>
<dbReference type="SUPFAM" id="SSF103473">
    <property type="entry name" value="MFS general substrate transporter"/>
    <property type="match status" value="1"/>
</dbReference>
<dbReference type="PROSITE" id="PS50850">
    <property type="entry name" value="MFS"/>
    <property type="match status" value="1"/>
</dbReference>
<proteinExistence type="inferred from homology"/>
<feature type="chain" id="PRO_0000050490" description="Putative metabolite transport protein HI_1104">
    <location>
        <begin position="1"/>
        <end position="407"/>
    </location>
</feature>
<feature type="topological domain" description="Cytoplasmic" evidence="1">
    <location>
        <begin position="1"/>
        <end position="16"/>
    </location>
</feature>
<feature type="transmembrane region" description="Helical; Name=1" evidence="1">
    <location>
        <begin position="17"/>
        <end position="37"/>
    </location>
</feature>
<feature type="topological domain" description="Periplasmic" evidence="1">
    <location>
        <begin position="38"/>
        <end position="48"/>
    </location>
</feature>
<feature type="transmembrane region" description="Helical; Name=2" evidence="1">
    <location>
        <begin position="49"/>
        <end position="69"/>
    </location>
</feature>
<feature type="topological domain" description="Cytoplasmic" evidence="1">
    <location>
        <begin position="70"/>
        <end position="77"/>
    </location>
</feature>
<feature type="transmembrane region" description="Helical; Name=3" evidence="1">
    <location>
        <begin position="78"/>
        <end position="98"/>
    </location>
</feature>
<feature type="topological domain" description="Periplasmic" evidence="1">
    <location>
        <begin position="99"/>
        <end position="107"/>
    </location>
</feature>
<feature type="transmembrane region" description="Helical; Name=4" evidence="1">
    <location>
        <begin position="108"/>
        <end position="128"/>
    </location>
</feature>
<feature type="topological domain" description="Cytoplasmic" evidence="1">
    <location>
        <begin position="129"/>
        <end position="138"/>
    </location>
</feature>
<feature type="transmembrane region" description="Helical; Name=5" evidence="1">
    <location>
        <begin position="139"/>
        <end position="159"/>
    </location>
</feature>
<feature type="topological domain" description="Periplasmic" evidence="1">
    <location>
        <position position="160"/>
    </location>
</feature>
<feature type="transmembrane region" description="Helical; Name=6" evidence="1">
    <location>
        <begin position="161"/>
        <end position="181"/>
    </location>
</feature>
<feature type="topological domain" description="Cytoplasmic" evidence="1">
    <location>
        <begin position="182"/>
        <end position="224"/>
    </location>
</feature>
<feature type="transmembrane region" description="Helical; Name=7" evidence="1">
    <location>
        <begin position="225"/>
        <end position="245"/>
    </location>
</feature>
<feature type="topological domain" description="Periplasmic" evidence="1">
    <location>
        <begin position="246"/>
        <end position="261"/>
    </location>
</feature>
<feature type="transmembrane region" description="Helical; Name=8" evidence="1">
    <location>
        <begin position="262"/>
        <end position="282"/>
    </location>
</feature>
<feature type="topological domain" description="Cytoplasmic" evidence="1">
    <location>
        <begin position="283"/>
        <end position="288"/>
    </location>
</feature>
<feature type="transmembrane region" description="Helical; Name=9" evidence="1">
    <location>
        <begin position="289"/>
        <end position="309"/>
    </location>
</feature>
<feature type="topological domain" description="Periplasmic" evidence="1">
    <location>
        <begin position="310"/>
        <end position="312"/>
    </location>
</feature>
<feature type="transmembrane region" description="Helical; Name=10" evidence="1">
    <location>
        <begin position="313"/>
        <end position="333"/>
    </location>
</feature>
<feature type="topological domain" description="Cytoplasmic" evidence="1">
    <location>
        <begin position="334"/>
        <end position="357"/>
    </location>
</feature>
<feature type="transmembrane region" description="Helical; Name=11" evidence="1">
    <location>
        <begin position="358"/>
        <end position="378"/>
    </location>
</feature>
<feature type="transmembrane region" description="Helical; Name=12" evidence="1">
    <location>
        <begin position="379"/>
        <end position="399"/>
    </location>
</feature>
<feature type="topological domain" description="Cytoplasmic" evidence="1">
    <location>
        <begin position="400"/>
        <end position="407"/>
    </location>
</feature>
<organism>
    <name type="scientific">Haemophilus influenzae (strain ATCC 51907 / DSM 11121 / KW20 / Rd)</name>
    <dbReference type="NCBI Taxonomy" id="71421"/>
    <lineage>
        <taxon>Bacteria</taxon>
        <taxon>Pseudomonadati</taxon>
        <taxon>Pseudomonadota</taxon>
        <taxon>Gammaproteobacteria</taxon>
        <taxon>Pasteurellales</taxon>
        <taxon>Pasteurellaceae</taxon>
        <taxon>Haemophilus</taxon>
    </lineage>
</organism>
<name>Y1104_HAEIN</name>
<comment type="subcellular location">
    <subcellularLocation>
        <location evidence="2">Cell inner membrane</location>
        <topology evidence="2">Multi-pass membrane protein</topology>
    </subcellularLocation>
</comment>
<comment type="similarity">
    <text evidence="2">Belongs to the major facilitator superfamily. Aromatic acid:H(+) symporter (AAHS) (TC 2.A.1.15) family.</text>
</comment>
<evidence type="ECO:0000255" key="1"/>
<evidence type="ECO:0000305" key="2"/>
<protein>
    <recommendedName>
        <fullName>Putative metabolite transport protein HI_1104</fullName>
    </recommendedName>
</protein>
<accession>P71369</accession>
<sequence>MTNKVNSYGWKALIGSAVGYGMDGFDLLILGFMLSAISADLNLTPAQGGSLVTWTLIGAVFGGILFGALSDKYGRVRVLTWTILLFAVFTGLCAIAQGYWDLLIYRTIAGIGLGGEFGIGMALAAEAWPARHRAKAASYVALGWQVGVLGAALLTPLLLPHIGWRGMFLVGIFPAFVAWFLRSHLHEPEIFTQKQTALSTQSSFTDKLRSFQLLIKDKATSKISLGIVVLTSVQNFGYYGIMIWLPNFLSKQLGFSLTKSGLWTAVTVCGMMAGIWIFGQLADRIGRKPSFLLFQLGAVISIVVYSQLTDPDIMLLAGAFLGMFVNGMLGGYGALMAEAYPTEARATAQNVLFNIGRAVGGFGPVVVGSVVLAYSFQTAIALLAIIYVIDMLATIFLIPELKGKALD</sequence>